<gene>
    <name evidence="1" type="primary">nqrA</name>
    <name type="ordered locus">plu1196</name>
</gene>
<sequence length="447" mass="49071">MIKIKKGLDLPIAGAPAQVIEDGPTIRHVALLGEEYVGMRPSMLVKEGEHVKKGQILFEDKKNPGVVFTSPACGQVVAINRGEQRILQSIVIEITGDEQVNFDRYDRAQFTQLSREQVEKNLIDSGLWTALRTRPYSRSPAPGSSPKAIFVTAMDTQPLAANSQVIIATDKEAFVDGLNVLTKLTEGKVHVCHSAGSLPNVGNNAQITYNQFSGPHPAGLAGTHIHFIEPVSATKTVWHLGYQDVIAIGKLFTTGTLYTDRVIALAGPQVEKPRLIRTCLGADLLELTQGQLKQGENRIISGSVLCGTQSDEVHHYLGRFHTLVSVLREGREKELFGWIMPGIDKFSITRTTIGHFLKNKRFAFSTTMNGGERSMVPIGNYERVMPLDIMATHLLRDLLAGDTDSAQALGCLELDEEDLALCTYVCPGKYEYGPVLREVLTKIEQEG</sequence>
<evidence type="ECO:0000255" key="1">
    <source>
        <dbReference type="HAMAP-Rule" id="MF_00425"/>
    </source>
</evidence>
<keyword id="KW-0406">Ion transport</keyword>
<keyword id="KW-0520">NAD</keyword>
<keyword id="KW-1185">Reference proteome</keyword>
<keyword id="KW-0915">Sodium</keyword>
<keyword id="KW-0739">Sodium transport</keyword>
<keyword id="KW-1278">Translocase</keyword>
<keyword id="KW-0813">Transport</keyword>
<keyword id="KW-0830">Ubiquinone</keyword>
<organism>
    <name type="scientific">Photorhabdus laumondii subsp. laumondii (strain DSM 15139 / CIP 105565 / TT01)</name>
    <name type="common">Photorhabdus luminescens subsp. laumondii</name>
    <dbReference type="NCBI Taxonomy" id="243265"/>
    <lineage>
        <taxon>Bacteria</taxon>
        <taxon>Pseudomonadati</taxon>
        <taxon>Pseudomonadota</taxon>
        <taxon>Gammaproteobacteria</taxon>
        <taxon>Enterobacterales</taxon>
        <taxon>Morganellaceae</taxon>
        <taxon>Photorhabdus</taxon>
    </lineage>
</organism>
<reference key="1">
    <citation type="journal article" date="2003" name="Nat. Biotechnol.">
        <title>The genome sequence of the entomopathogenic bacterium Photorhabdus luminescens.</title>
        <authorList>
            <person name="Duchaud E."/>
            <person name="Rusniok C."/>
            <person name="Frangeul L."/>
            <person name="Buchrieser C."/>
            <person name="Givaudan A."/>
            <person name="Taourit S."/>
            <person name="Bocs S."/>
            <person name="Boursaux-Eude C."/>
            <person name="Chandler M."/>
            <person name="Charles J.-F."/>
            <person name="Dassa E."/>
            <person name="Derose R."/>
            <person name="Derzelle S."/>
            <person name="Freyssinet G."/>
            <person name="Gaudriault S."/>
            <person name="Medigue C."/>
            <person name="Lanois A."/>
            <person name="Powell K."/>
            <person name="Siguier P."/>
            <person name="Vincent R."/>
            <person name="Wingate V."/>
            <person name="Zouine M."/>
            <person name="Glaser P."/>
            <person name="Boemare N."/>
            <person name="Danchin A."/>
            <person name="Kunst F."/>
        </authorList>
    </citation>
    <scope>NUCLEOTIDE SEQUENCE [LARGE SCALE GENOMIC DNA]</scope>
    <source>
        <strain>DSM 15139 / CIP 105565 / TT01</strain>
    </source>
</reference>
<dbReference type="EC" id="7.2.1.1" evidence="1"/>
<dbReference type="EMBL" id="BX571862">
    <property type="protein sequence ID" value="CAE13490.1"/>
    <property type="molecule type" value="Genomic_DNA"/>
</dbReference>
<dbReference type="RefSeq" id="WP_011145523.1">
    <property type="nucleotide sequence ID" value="NC_005126.1"/>
</dbReference>
<dbReference type="SMR" id="Q7N7F4"/>
<dbReference type="STRING" id="243265.plu1196"/>
<dbReference type="GeneID" id="48847466"/>
<dbReference type="KEGG" id="plu:plu1196"/>
<dbReference type="eggNOG" id="COG1726">
    <property type="taxonomic scope" value="Bacteria"/>
</dbReference>
<dbReference type="HOGENOM" id="CLU_046656_0_0_6"/>
<dbReference type="OrthoDB" id="9774536at2"/>
<dbReference type="Proteomes" id="UP000002514">
    <property type="component" value="Chromosome"/>
</dbReference>
<dbReference type="GO" id="GO:0016655">
    <property type="term" value="F:oxidoreductase activity, acting on NAD(P)H, quinone or similar compound as acceptor"/>
    <property type="evidence" value="ECO:0007669"/>
    <property type="project" value="UniProtKB-UniRule"/>
</dbReference>
<dbReference type="GO" id="GO:0006814">
    <property type="term" value="P:sodium ion transport"/>
    <property type="evidence" value="ECO:0007669"/>
    <property type="project" value="UniProtKB-UniRule"/>
</dbReference>
<dbReference type="HAMAP" id="MF_00425">
    <property type="entry name" value="NqrA"/>
    <property type="match status" value="1"/>
</dbReference>
<dbReference type="InterPro" id="IPR008703">
    <property type="entry name" value="NqrA"/>
</dbReference>
<dbReference type="InterPro" id="IPR056148">
    <property type="entry name" value="NQRA_2nd"/>
</dbReference>
<dbReference type="InterPro" id="IPR022615">
    <property type="entry name" value="NqrA_C_domain"/>
</dbReference>
<dbReference type="InterPro" id="IPR056147">
    <property type="entry name" value="NQRA_N"/>
</dbReference>
<dbReference type="NCBIfam" id="TIGR01936">
    <property type="entry name" value="nqrA"/>
    <property type="match status" value="1"/>
</dbReference>
<dbReference type="NCBIfam" id="NF003759">
    <property type="entry name" value="PRK05352.1-2"/>
    <property type="match status" value="1"/>
</dbReference>
<dbReference type="PANTHER" id="PTHR37839">
    <property type="entry name" value="NA(+)-TRANSLOCATING NADH-QUINONE REDUCTASE SUBUNIT A"/>
    <property type="match status" value="1"/>
</dbReference>
<dbReference type="PANTHER" id="PTHR37839:SF1">
    <property type="entry name" value="NA(+)-TRANSLOCATING NADH-QUINONE REDUCTASE SUBUNIT A"/>
    <property type="match status" value="1"/>
</dbReference>
<dbReference type="Pfam" id="PF24836">
    <property type="entry name" value="NQRA_2nd"/>
    <property type="match status" value="1"/>
</dbReference>
<dbReference type="Pfam" id="PF05896">
    <property type="entry name" value="NQRA_N"/>
    <property type="match status" value="1"/>
</dbReference>
<dbReference type="Pfam" id="PF11973">
    <property type="entry name" value="NQRA_SLBB"/>
    <property type="match status" value="1"/>
</dbReference>
<proteinExistence type="inferred from homology"/>
<comment type="function">
    <text evidence="1">NQR complex catalyzes the reduction of ubiquinone-1 to ubiquinol by two successive reactions, coupled with the transport of Na(+) ions from the cytoplasm to the periplasm. NqrA to NqrE are probably involved in the second step, the conversion of ubisemiquinone to ubiquinol.</text>
</comment>
<comment type="catalytic activity">
    <reaction evidence="1">
        <text>a ubiquinone + n Na(+)(in) + NADH + H(+) = a ubiquinol + n Na(+)(out) + NAD(+)</text>
        <dbReference type="Rhea" id="RHEA:47748"/>
        <dbReference type="Rhea" id="RHEA-COMP:9565"/>
        <dbReference type="Rhea" id="RHEA-COMP:9566"/>
        <dbReference type="ChEBI" id="CHEBI:15378"/>
        <dbReference type="ChEBI" id="CHEBI:16389"/>
        <dbReference type="ChEBI" id="CHEBI:17976"/>
        <dbReference type="ChEBI" id="CHEBI:29101"/>
        <dbReference type="ChEBI" id="CHEBI:57540"/>
        <dbReference type="ChEBI" id="CHEBI:57945"/>
        <dbReference type="EC" id="7.2.1.1"/>
    </reaction>
</comment>
<comment type="subunit">
    <text evidence="1">Composed of six subunits; NqrA, NqrB, NqrC, NqrD, NqrE and NqrF.</text>
</comment>
<comment type="similarity">
    <text evidence="1">Belongs to the NqrA family.</text>
</comment>
<accession>Q7N7F4</accession>
<protein>
    <recommendedName>
        <fullName evidence="1">Na(+)-translocating NADH-quinone reductase subunit A</fullName>
        <shortName evidence="1">Na(+)-NQR subunit A</shortName>
        <shortName evidence="1">Na(+)-translocating NQR subunit A</shortName>
        <ecNumber evidence="1">7.2.1.1</ecNumber>
    </recommendedName>
    <alternativeName>
        <fullName evidence="1">NQR complex subunit A</fullName>
    </alternativeName>
    <alternativeName>
        <fullName evidence="1">NQR-1 subunit A</fullName>
    </alternativeName>
</protein>
<feature type="chain" id="PRO_1000060122" description="Na(+)-translocating NADH-quinone reductase subunit A">
    <location>
        <begin position="1"/>
        <end position="447"/>
    </location>
</feature>
<name>NQRA_PHOLL</name>